<comment type="function">
    <text>Interacts with the cell-bound hemolysin. Necessary for the extracellular secretion and activation of the hemolysin.</text>
</comment>
<comment type="function">
    <text evidence="1">Probable member of a two partner secretion pathway (TPS) in which it mediates the secretion of hemolysin.</text>
</comment>
<comment type="subcellular location">
    <subcellularLocation>
        <location>Cell outer membrane</location>
    </subcellularLocation>
</comment>
<comment type="domain">
    <text evidence="1">Probably a beta-barrel protein.</text>
</comment>
<comment type="similarity">
    <text evidence="3">Belongs to the TPS (TC 1.B.20) family.</text>
</comment>
<dbReference type="EMBL" id="M30186">
    <property type="protein sequence ID" value="AAA25656.1"/>
    <property type="molecule type" value="Genomic_DNA"/>
</dbReference>
<dbReference type="PIR" id="B35140">
    <property type="entry name" value="B35140"/>
</dbReference>
<dbReference type="RefSeq" id="WP_136264517.1">
    <property type="nucleotide sequence ID" value="NZ_CAXOPX010000002.1"/>
</dbReference>
<dbReference type="SMR" id="P16465"/>
<dbReference type="STRING" id="584.AOUC001_04495"/>
<dbReference type="TCDB" id="1.B.20.1.2">
    <property type="family name" value="the two-partner secretion (tps) family"/>
</dbReference>
<dbReference type="GO" id="GO:0009279">
    <property type="term" value="C:cell outer membrane"/>
    <property type="evidence" value="ECO:0007669"/>
    <property type="project" value="UniProtKB-SubCell"/>
</dbReference>
<dbReference type="GO" id="GO:0046930">
    <property type="term" value="C:pore complex"/>
    <property type="evidence" value="ECO:0007669"/>
    <property type="project" value="UniProtKB-KW"/>
</dbReference>
<dbReference type="GO" id="GO:0098046">
    <property type="term" value="C:type V protein secretion system complex"/>
    <property type="evidence" value="ECO:0007669"/>
    <property type="project" value="TreeGrafter"/>
</dbReference>
<dbReference type="GO" id="GO:0015288">
    <property type="term" value="F:porin activity"/>
    <property type="evidence" value="ECO:0007669"/>
    <property type="project" value="UniProtKB-KW"/>
</dbReference>
<dbReference type="GO" id="GO:0008320">
    <property type="term" value="F:protein transmembrane transporter activity"/>
    <property type="evidence" value="ECO:0007669"/>
    <property type="project" value="TreeGrafter"/>
</dbReference>
<dbReference type="GO" id="GO:0031640">
    <property type="term" value="P:killing of cells of another organism"/>
    <property type="evidence" value="ECO:0007669"/>
    <property type="project" value="UniProtKB-KW"/>
</dbReference>
<dbReference type="GO" id="GO:0006811">
    <property type="term" value="P:monoatomic ion transport"/>
    <property type="evidence" value="ECO:0007669"/>
    <property type="project" value="UniProtKB-KW"/>
</dbReference>
<dbReference type="GO" id="GO:0046819">
    <property type="term" value="P:protein secretion by the type V secretion system"/>
    <property type="evidence" value="ECO:0007669"/>
    <property type="project" value="TreeGrafter"/>
</dbReference>
<dbReference type="Gene3D" id="3.10.20.310">
    <property type="entry name" value="membrane protein fhac"/>
    <property type="match status" value="1"/>
</dbReference>
<dbReference type="Gene3D" id="2.40.160.50">
    <property type="entry name" value="membrane protein fhac: a member of the omp85/tpsb transporter family"/>
    <property type="match status" value="1"/>
</dbReference>
<dbReference type="InterPro" id="IPR005565">
    <property type="entry name" value="Hemolysn_activator_HlyB_C"/>
</dbReference>
<dbReference type="InterPro" id="IPR013686">
    <property type="entry name" value="Polypept-transport_assoc_ShlB"/>
</dbReference>
<dbReference type="InterPro" id="IPR034746">
    <property type="entry name" value="POTRA"/>
</dbReference>
<dbReference type="InterPro" id="IPR035251">
    <property type="entry name" value="ShlB_POTRA"/>
</dbReference>
<dbReference type="InterPro" id="IPR027282">
    <property type="entry name" value="TPS"/>
</dbReference>
<dbReference type="InterPro" id="IPR051544">
    <property type="entry name" value="TPS_OM_transporter"/>
</dbReference>
<dbReference type="PANTHER" id="PTHR34597:SF3">
    <property type="entry name" value="OUTER MEMBRANE TRANSPORTER CDIB"/>
    <property type="match status" value="1"/>
</dbReference>
<dbReference type="PANTHER" id="PTHR34597">
    <property type="entry name" value="SLR1661 PROTEIN"/>
    <property type="match status" value="1"/>
</dbReference>
<dbReference type="Pfam" id="PF08479">
    <property type="entry name" value="POTRA_2"/>
    <property type="match status" value="1"/>
</dbReference>
<dbReference type="Pfam" id="PF17287">
    <property type="entry name" value="POTRA_3"/>
    <property type="match status" value="1"/>
</dbReference>
<dbReference type="Pfam" id="PF03865">
    <property type="entry name" value="ShlB"/>
    <property type="match status" value="1"/>
</dbReference>
<dbReference type="PIRSF" id="PIRSF029745">
    <property type="entry name" value="FhaC"/>
    <property type="match status" value="1"/>
</dbReference>
<dbReference type="PROSITE" id="PS51779">
    <property type="entry name" value="POTRA"/>
    <property type="match status" value="1"/>
</dbReference>
<evidence type="ECO:0000250" key="1"/>
<evidence type="ECO:0000255" key="2">
    <source>
        <dbReference type="PROSITE-ProRule" id="PRU01115"/>
    </source>
</evidence>
<evidence type="ECO:0000305" key="3"/>
<name>HLYB_PROMI</name>
<gene>
    <name type="primary">hpmB</name>
</gene>
<keyword id="KW-0998">Cell outer membrane</keyword>
<keyword id="KW-0204">Cytolysis</keyword>
<keyword id="KW-0354">Hemolysis</keyword>
<keyword id="KW-0406">Ion transport</keyword>
<keyword id="KW-0472">Membrane</keyword>
<keyword id="KW-0626">Porin</keyword>
<keyword id="KW-0653">Protein transport</keyword>
<keyword id="KW-0732">Signal</keyword>
<keyword id="KW-0812">Transmembrane</keyword>
<keyword id="KW-1134">Transmembrane beta strand</keyword>
<keyword id="KW-0813">Transport</keyword>
<proteinExistence type="inferred from homology"/>
<organism>
    <name type="scientific">Proteus mirabilis</name>
    <dbReference type="NCBI Taxonomy" id="584"/>
    <lineage>
        <taxon>Bacteria</taxon>
        <taxon>Pseudomonadati</taxon>
        <taxon>Pseudomonadota</taxon>
        <taxon>Gammaproteobacteria</taxon>
        <taxon>Enterobacterales</taxon>
        <taxon>Morganellaceae</taxon>
        <taxon>Proteus</taxon>
    </lineage>
</organism>
<reference key="1">
    <citation type="journal article" date="1990" name="J. Bacteriol.">
        <title>Nucleotide sequencing of the Proteus mirabilis calcium-independent hemolysin genes (hpmA and hpmB) reveals sequence similarity with the Serratia marcescens hemolysin genes (shlA and shlB).</title>
        <authorList>
            <person name="Uphoff T.S."/>
            <person name="Welch R.A."/>
        </authorList>
    </citation>
    <scope>NUCLEOTIDE SEQUENCE [GENOMIC DNA]</scope>
    <source>
        <strain>Isolate 477-12</strain>
    </source>
</reference>
<sequence>MKKKVVLLTLLSCFSTSGLSANETGNLGSISESRRALQDSQREINQLIEQNRYQQLQEKAVNISPTPTLITESEHCLPIKGVYIQGITLLTEKDLNSLSPLPDQCIKSADINRLVKELTQRYLQHGYITARIQFLRPNQHGELGLYAIEGFVERIEGGDRGVNTTLLFPRIKGQPLKLATLDQGLDQANRLQSNKVTVDILPGTELGGSVIKLSNQRKSPWHLNIASDNYGQKNSGRWLIRTNASLDSPLGLSDFVSLNANITTDNPNTRFNRAYTLLYSIPYGGFTFSSFGSYSEYQFHQKLQTRTVNLYGDTTQVGIRGDYAFSRSQKQIDTLNIQVTHKRIRNYFSQIRLDLSSPKLTTIELGINHLQIIPNGVLSTNLSVEKAVGWFGAEETPYIANGNGNDYRFTKVKLFTNWYQRFSLWHSTFLFNSTFLGQYSHDTLPGVEWLSLTDKNAIRGFDQSTLSGDNGGYLRNTLSYPYRLNHFSITPRIGVDIGQVKQHGNYKGWQGGYGLSSGLNIQYQQAQLDLEVAKGELLYHQTNSNKTKDPTQLLVKFSYLF</sequence>
<accession>P16465</accession>
<protein>
    <recommendedName>
        <fullName>Hemolysin transporter protein HpmB</fullName>
    </recommendedName>
</protein>
<feature type="signal peptide">
    <location>
        <begin position="1"/>
        <end position="17"/>
    </location>
</feature>
<feature type="chain" id="PRO_0000018664" description="Hemolysin transporter protein HpmB">
    <location>
        <begin position="18"/>
        <end position="561"/>
    </location>
</feature>
<feature type="domain" description="POTRA" evidence="2">
    <location>
        <begin position="77"/>
        <end position="150"/>
    </location>
</feature>